<name>LEUD_NEIMB</name>
<comment type="function">
    <text evidence="1">Catalyzes the isomerization between 2-isopropylmalate and 3-isopropylmalate, via the formation of 2-isopropylmaleate.</text>
</comment>
<comment type="catalytic activity">
    <reaction evidence="1">
        <text>(2R,3S)-3-isopropylmalate = (2S)-2-isopropylmalate</text>
        <dbReference type="Rhea" id="RHEA:32287"/>
        <dbReference type="ChEBI" id="CHEBI:1178"/>
        <dbReference type="ChEBI" id="CHEBI:35121"/>
        <dbReference type="EC" id="4.2.1.33"/>
    </reaction>
</comment>
<comment type="pathway">
    <text evidence="1">Amino-acid biosynthesis; L-leucine biosynthesis; L-leucine from 3-methyl-2-oxobutanoate: step 2/4.</text>
</comment>
<comment type="subunit">
    <text evidence="1">Heterodimer of LeuC and LeuD.</text>
</comment>
<comment type="similarity">
    <text evidence="1">Belongs to the LeuD family. LeuD type 1 subfamily.</text>
</comment>
<feature type="chain" id="PRO_0000141845" description="3-isopropylmalate dehydratase small subunit">
    <location>
        <begin position="1"/>
        <end position="213"/>
    </location>
</feature>
<protein>
    <recommendedName>
        <fullName evidence="1">3-isopropylmalate dehydratase small subunit</fullName>
        <ecNumber evidence="1">4.2.1.33</ecNumber>
    </recommendedName>
    <alternativeName>
        <fullName evidence="1">Alpha-IPM isomerase</fullName>
        <shortName evidence="1">IPMI</shortName>
    </alternativeName>
    <alternativeName>
        <fullName evidence="1">Isopropylmalate isomerase</fullName>
    </alternativeName>
</protein>
<reference key="1">
    <citation type="journal article" date="2000" name="Science">
        <title>Complete genome sequence of Neisseria meningitidis serogroup B strain MC58.</title>
        <authorList>
            <person name="Tettelin H."/>
            <person name="Saunders N.J."/>
            <person name="Heidelberg J.F."/>
            <person name="Jeffries A.C."/>
            <person name="Nelson K.E."/>
            <person name="Eisen J.A."/>
            <person name="Ketchum K.A."/>
            <person name="Hood D.W."/>
            <person name="Peden J.F."/>
            <person name="Dodson R.J."/>
            <person name="Nelson W.C."/>
            <person name="Gwinn M.L."/>
            <person name="DeBoy R.T."/>
            <person name="Peterson J.D."/>
            <person name="Hickey E.K."/>
            <person name="Haft D.H."/>
            <person name="Salzberg S.L."/>
            <person name="White O."/>
            <person name="Fleischmann R.D."/>
            <person name="Dougherty B.A."/>
            <person name="Mason T.M."/>
            <person name="Ciecko A."/>
            <person name="Parksey D.S."/>
            <person name="Blair E."/>
            <person name="Cittone H."/>
            <person name="Clark E.B."/>
            <person name="Cotton M.D."/>
            <person name="Utterback T.R."/>
            <person name="Khouri H.M."/>
            <person name="Qin H."/>
            <person name="Vamathevan J.J."/>
            <person name="Gill J."/>
            <person name="Scarlato V."/>
            <person name="Masignani V."/>
            <person name="Pizza M."/>
            <person name="Grandi G."/>
            <person name="Sun L."/>
            <person name="Smith H.O."/>
            <person name="Fraser C.M."/>
            <person name="Moxon E.R."/>
            <person name="Rappuoli R."/>
            <person name="Venter J.C."/>
        </authorList>
    </citation>
    <scope>NUCLEOTIDE SEQUENCE [LARGE SCALE GENOMIC DNA]</scope>
    <source>
        <strain>ATCC BAA-335 / MC58</strain>
    </source>
</reference>
<accession>Q9JZI6</accession>
<evidence type="ECO:0000255" key="1">
    <source>
        <dbReference type="HAMAP-Rule" id="MF_01031"/>
    </source>
</evidence>
<proteinExistence type="inferred from homology"/>
<sequence length="213" mass="24264">MKAFTKITAIVAPLDRSNVDTDAIIPKQFLKSIKRSGFGPNAFDEWRYLDHGEPGMDNSKRPLNPDFSLNQPRYQGAQILLTRKNFGCGSSREHAPWALDDYGFRAVIAPSFADIFFNNCYKNGLLPIVLTEERVDRLFKEVEANEGYQLSIDLAEQTLTTPSGETFTFDITEHRKHCLLNGLDEIGLTLQHADEIHAFEEKRRQSQPWLFNG</sequence>
<keyword id="KW-0028">Amino-acid biosynthesis</keyword>
<keyword id="KW-0100">Branched-chain amino acid biosynthesis</keyword>
<keyword id="KW-0432">Leucine biosynthesis</keyword>
<keyword id="KW-0456">Lyase</keyword>
<keyword id="KW-1185">Reference proteome</keyword>
<gene>
    <name evidence="1" type="primary">leuD</name>
    <name type="ordered locus">NMB1034</name>
</gene>
<dbReference type="EC" id="4.2.1.33" evidence="1"/>
<dbReference type="EMBL" id="AE002098">
    <property type="protein sequence ID" value="AAF41433.1"/>
    <property type="molecule type" value="Genomic_DNA"/>
</dbReference>
<dbReference type="PIR" id="E81128">
    <property type="entry name" value="E81128"/>
</dbReference>
<dbReference type="RefSeq" id="NP_274068.1">
    <property type="nucleotide sequence ID" value="NC_003112.2"/>
</dbReference>
<dbReference type="RefSeq" id="WP_002222556.1">
    <property type="nucleotide sequence ID" value="NC_003112.2"/>
</dbReference>
<dbReference type="SMR" id="Q9JZI6"/>
<dbReference type="FunCoup" id="Q9JZI6">
    <property type="interactions" value="495"/>
</dbReference>
<dbReference type="STRING" id="122586.NMB1034"/>
<dbReference type="PaxDb" id="122586-NMB1034"/>
<dbReference type="KEGG" id="nme:NMB1034"/>
<dbReference type="PATRIC" id="fig|122586.8.peg.1318"/>
<dbReference type="HOGENOM" id="CLU_081378_0_3_4"/>
<dbReference type="InParanoid" id="Q9JZI6"/>
<dbReference type="OrthoDB" id="9777465at2"/>
<dbReference type="UniPathway" id="UPA00048">
    <property type="reaction ID" value="UER00071"/>
</dbReference>
<dbReference type="Proteomes" id="UP000000425">
    <property type="component" value="Chromosome"/>
</dbReference>
<dbReference type="GO" id="GO:0009316">
    <property type="term" value="C:3-isopropylmalate dehydratase complex"/>
    <property type="evidence" value="ECO:0007669"/>
    <property type="project" value="InterPro"/>
</dbReference>
<dbReference type="GO" id="GO:0003861">
    <property type="term" value="F:3-isopropylmalate dehydratase activity"/>
    <property type="evidence" value="ECO:0007669"/>
    <property type="project" value="UniProtKB-UniRule"/>
</dbReference>
<dbReference type="GO" id="GO:0009098">
    <property type="term" value="P:L-leucine biosynthetic process"/>
    <property type="evidence" value="ECO:0007669"/>
    <property type="project" value="UniProtKB-UniRule"/>
</dbReference>
<dbReference type="CDD" id="cd01577">
    <property type="entry name" value="IPMI_Swivel"/>
    <property type="match status" value="1"/>
</dbReference>
<dbReference type="FunFam" id="3.20.19.10:FF:000003">
    <property type="entry name" value="3-isopropylmalate dehydratase small subunit"/>
    <property type="match status" value="1"/>
</dbReference>
<dbReference type="Gene3D" id="3.20.19.10">
    <property type="entry name" value="Aconitase, domain 4"/>
    <property type="match status" value="1"/>
</dbReference>
<dbReference type="HAMAP" id="MF_01031">
    <property type="entry name" value="LeuD_type1"/>
    <property type="match status" value="1"/>
</dbReference>
<dbReference type="InterPro" id="IPR004431">
    <property type="entry name" value="3-IsopropMal_deHydase_ssu"/>
</dbReference>
<dbReference type="InterPro" id="IPR015928">
    <property type="entry name" value="Aconitase/3IPM_dehydase_swvl"/>
</dbReference>
<dbReference type="InterPro" id="IPR000573">
    <property type="entry name" value="AconitaseA/IPMdHydase_ssu_swvl"/>
</dbReference>
<dbReference type="InterPro" id="IPR033940">
    <property type="entry name" value="IPMI_Swivel"/>
</dbReference>
<dbReference type="InterPro" id="IPR050075">
    <property type="entry name" value="LeuD"/>
</dbReference>
<dbReference type="NCBIfam" id="TIGR00171">
    <property type="entry name" value="leuD"/>
    <property type="match status" value="1"/>
</dbReference>
<dbReference type="NCBIfam" id="NF002458">
    <property type="entry name" value="PRK01641.1"/>
    <property type="match status" value="1"/>
</dbReference>
<dbReference type="PANTHER" id="PTHR43345:SF5">
    <property type="entry name" value="3-ISOPROPYLMALATE DEHYDRATASE SMALL SUBUNIT"/>
    <property type="match status" value="1"/>
</dbReference>
<dbReference type="PANTHER" id="PTHR43345">
    <property type="entry name" value="3-ISOPROPYLMALATE DEHYDRATASE SMALL SUBUNIT 2-RELATED-RELATED"/>
    <property type="match status" value="1"/>
</dbReference>
<dbReference type="Pfam" id="PF00694">
    <property type="entry name" value="Aconitase_C"/>
    <property type="match status" value="1"/>
</dbReference>
<dbReference type="SUPFAM" id="SSF52016">
    <property type="entry name" value="LeuD/IlvD-like"/>
    <property type="match status" value="1"/>
</dbReference>
<organism>
    <name type="scientific">Neisseria meningitidis serogroup B (strain ATCC BAA-335 / MC58)</name>
    <dbReference type="NCBI Taxonomy" id="122586"/>
    <lineage>
        <taxon>Bacteria</taxon>
        <taxon>Pseudomonadati</taxon>
        <taxon>Pseudomonadota</taxon>
        <taxon>Betaproteobacteria</taxon>
        <taxon>Neisseriales</taxon>
        <taxon>Neisseriaceae</taxon>
        <taxon>Neisseria</taxon>
    </lineage>
</organism>